<reference key="1">
    <citation type="journal article" date="2005" name="Nature">
        <title>The genome of the social amoeba Dictyostelium discoideum.</title>
        <authorList>
            <person name="Eichinger L."/>
            <person name="Pachebat J.A."/>
            <person name="Gloeckner G."/>
            <person name="Rajandream M.A."/>
            <person name="Sucgang R."/>
            <person name="Berriman M."/>
            <person name="Song J."/>
            <person name="Olsen R."/>
            <person name="Szafranski K."/>
            <person name="Xu Q."/>
            <person name="Tunggal B."/>
            <person name="Kummerfeld S."/>
            <person name="Madera M."/>
            <person name="Konfortov B.A."/>
            <person name="Rivero F."/>
            <person name="Bankier A.T."/>
            <person name="Lehmann R."/>
            <person name="Hamlin N."/>
            <person name="Davies R."/>
            <person name="Gaudet P."/>
            <person name="Fey P."/>
            <person name="Pilcher K."/>
            <person name="Chen G."/>
            <person name="Saunders D."/>
            <person name="Sodergren E.J."/>
            <person name="Davis P."/>
            <person name="Kerhornou A."/>
            <person name="Nie X."/>
            <person name="Hall N."/>
            <person name="Anjard C."/>
            <person name="Hemphill L."/>
            <person name="Bason N."/>
            <person name="Farbrother P."/>
            <person name="Desany B."/>
            <person name="Just E."/>
            <person name="Morio T."/>
            <person name="Rost R."/>
            <person name="Churcher C.M."/>
            <person name="Cooper J."/>
            <person name="Haydock S."/>
            <person name="van Driessche N."/>
            <person name="Cronin A."/>
            <person name="Goodhead I."/>
            <person name="Muzny D.M."/>
            <person name="Mourier T."/>
            <person name="Pain A."/>
            <person name="Lu M."/>
            <person name="Harper D."/>
            <person name="Lindsay R."/>
            <person name="Hauser H."/>
            <person name="James K.D."/>
            <person name="Quiles M."/>
            <person name="Madan Babu M."/>
            <person name="Saito T."/>
            <person name="Buchrieser C."/>
            <person name="Wardroper A."/>
            <person name="Felder M."/>
            <person name="Thangavelu M."/>
            <person name="Johnson D."/>
            <person name="Knights A."/>
            <person name="Loulseged H."/>
            <person name="Mungall K.L."/>
            <person name="Oliver K."/>
            <person name="Price C."/>
            <person name="Quail M.A."/>
            <person name="Urushihara H."/>
            <person name="Hernandez J."/>
            <person name="Rabbinowitsch E."/>
            <person name="Steffen D."/>
            <person name="Sanders M."/>
            <person name="Ma J."/>
            <person name="Kohara Y."/>
            <person name="Sharp S."/>
            <person name="Simmonds M.N."/>
            <person name="Spiegler S."/>
            <person name="Tivey A."/>
            <person name="Sugano S."/>
            <person name="White B."/>
            <person name="Walker D."/>
            <person name="Woodward J.R."/>
            <person name="Winckler T."/>
            <person name="Tanaka Y."/>
            <person name="Shaulsky G."/>
            <person name="Schleicher M."/>
            <person name="Weinstock G.M."/>
            <person name="Rosenthal A."/>
            <person name="Cox E.C."/>
            <person name="Chisholm R.L."/>
            <person name="Gibbs R.A."/>
            <person name="Loomis W.F."/>
            <person name="Platzer M."/>
            <person name="Kay R.R."/>
            <person name="Williams J.G."/>
            <person name="Dear P.H."/>
            <person name="Noegel A.A."/>
            <person name="Barrell B.G."/>
            <person name="Kuspa A."/>
        </authorList>
    </citation>
    <scope>NUCLEOTIDE SEQUENCE [LARGE SCALE GENOMIC DNA]</scope>
    <source>
        <strain>AX4</strain>
    </source>
</reference>
<accession>Q54FR4</accession>
<comment type="subcellular location">
    <subcellularLocation>
        <location evidence="2">Membrane</location>
        <topology evidence="2">Multi-pass membrane protein</topology>
    </subcellularLocation>
</comment>
<comment type="similarity">
    <text evidence="2">Belongs to the peroxisomal membrane protein PXMP2/4 family.</text>
</comment>
<name>PX24D_DICDI</name>
<dbReference type="EMBL" id="AAFI02000164">
    <property type="protein sequence ID" value="EAL62176.1"/>
    <property type="molecule type" value="Genomic_DNA"/>
</dbReference>
<dbReference type="RefSeq" id="XP_635703.1">
    <property type="nucleotide sequence ID" value="XM_630611.1"/>
</dbReference>
<dbReference type="FunCoup" id="Q54FR4">
    <property type="interactions" value="103"/>
</dbReference>
<dbReference type="STRING" id="44689.Q54FR4"/>
<dbReference type="PaxDb" id="44689-DDB0302423"/>
<dbReference type="EnsemblProtists" id="EAL62176">
    <property type="protein sequence ID" value="EAL62176"/>
    <property type="gene ID" value="DDB_G0290631"/>
</dbReference>
<dbReference type="GeneID" id="8627774"/>
<dbReference type="KEGG" id="ddi:DDB_G0290631"/>
<dbReference type="dictyBase" id="DDB_G0290631"/>
<dbReference type="VEuPathDB" id="AmoebaDB:DDB_G0290631"/>
<dbReference type="eggNOG" id="KOG1944">
    <property type="taxonomic scope" value="Eukaryota"/>
</dbReference>
<dbReference type="HOGENOM" id="CLU_049109_4_1_1"/>
<dbReference type="InParanoid" id="Q54FR4"/>
<dbReference type="OMA" id="KFLYTWM"/>
<dbReference type="PhylomeDB" id="Q54FR4"/>
<dbReference type="Reactome" id="R-DDI-9603798">
    <property type="pathway name" value="Class I peroxisomal membrane protein import"/>
</dbReference>
<dbReference type="PRO" id="PR:Q54FR4"/>
<dbReference type="Proteomes" id="UP000002195">
    <property type="component" value="Chromosome 5"/>
</dbReference>
<dbReference type="GO" id="GO:0005737">
    <property type="term" value="C:cytoplasm"/>
    <property type="evidence" value="ECO:0000318"/>
    <property type="project" value="GO_Central"/>
</dbReference>
<dbReference type="GO" id="GO:0005778">
    <property type="term" value="C:peroxisomal membrane"/>
    <property type="evidence" value="ECO:0000318"/>
    <property type="project" value="GO_Central"/>
</dbReference>
<dbReference type="InterPro" id="IPR007248">
    <property type="entry name" value="Mpv17_PMP22"/>
</dbReference>
<dbReference type="PANTHER" id="PTHR11266:SF80">
    <property type="entry name" value="PEROXISOMAL MEMBRANE PROTEIN 2"/>
    <property type="match status" value="1"/>
</dbReference>
<dbReference type="PANTHER" id="PTHR11266">
    <property type="entry name" value="PEROXISOMAL MEMBRANE PROTEIN 2, PXMP2 MPV17"/>
    <property type="match status" value="1"/>
</dbReference>
<dbReference type="Pfam" id="PF04117">
    <property type="entry name" value="Mpv17_PMP22"/>
    <property type="match status" value="1"/>
</dbReference>
<sequence length="185" mass="21408">MSRLLVGLKLAQSHYLSQLHKYPVATKAVTSGFLYLISDSLVQGIELSRDKDKKYDFKRSMRMAVFGFAVTGPLFHYWFKYLDKHFPKKSYRHAFIKLTIDQVVCSPVFNFLFFSGMGILEGKSKDDIVEKLKKDWLTTYVSDCVVWPFINFVNFAYISSIHRVTFMNVCNIGWGAFLAKMNSSH</sequence>
<keyword id="KW-0472">Membrane</keyword>
<keyword id="KW-1185">Reference proteome</keyword>
<keyword id="KW-0812">Transmembrane</keyword>
<keyword id="KW-1133">Transmembrane helix</keyword>
<gene>
    <name type="ORF">DDB_G0290631</name>
</gene>
<proteinExistence type="inferred from homology"/>
<evidence type="ECO:0000255" key="1"/>
<evidence type="ECO:0000305" key="2"/>
<protein>
    <recommendedName>
        <fullName>PXMP2/4 family protein 4</fullName>
    </recommendedName>
</protein>
<organism>
    <name type="scientific">Dictyostelium discoideum</name>
    <name type="common">Social amoeba</name>
    <dbReference type="NCBI Taxonomy" id="44689"/>
    <lineage>
        <taxon>Eukaryota</taxon>
        <taxon>Amoebozoa</taxon>
        <taxon>Evosea</taxon>
        <taxon>Eumycetozoa</taxon>
        <taxon>Dictyostelia</taxon>
        <taxon>Dictyosteliales</taxon>
        <taxon>Dictyosteliaceae</taxon>
        <taxon>Dictyostelium</taxon>
    </lineage>
</organism>
<feature type="chain" id="PRO_0000333836" description="PXMP2/4 family protein 4">
    <location>
        <begin position="1"/>
        <end position="185"/>
    </location>
</feature>
<feature type="transmembrane region" description="Helical" evidence="1">
    <location>
        <begin position="63"/>
        <end position="83"/>
    </location>
</feature>
<feature type="transmembrane region" description="Helical" evidence="1">
    <location>
        <begin position="100"/>
        <end position="120"/>
    </location>
</feature>
<feature type="transmembrane region" description="Helical" evidence="1">
    <location>
        <begin position="141"/>
        <end position="161"/>
    </location>
</feature>